<comment type="function">
    <text evidence="1">Catalyzes the alpha,beta-elimination reaction of D-cysteine and of several D-cysteine derivatives. It could be a defense mechanism against D-cysteine.</text>
</comment>
<comment type="catalytic activity">
    <reaction evidence="1">
        <text>D-cysteine + H2O = hydrogen sulfide + pyruvate + NH4(+) + H(+)</text>
        <dbReference type="Rhea" id="RHEA:11268"/>
        <dbReference type="ChEBI" id="CHEBI:15361"/>
        <dbReference type="ChEBI" id="CHEBI:15377"/>
        <dbReference type="ChEBI" id="CHEBI:15378"/>
        <dbReference type="ChEBI" id="CHEBI:28938"/>
        <dbReference type="ChEBI" id="CHEBI:29919"/>
        <dbReference type="ChEBI" id="CHEBI:35236"/>
        <dbReference type="EC" id="4.4.1.15"/>
    </reaction>
</comment>
<comment type="cofactor">
    <cofactor evidence="1">
        <name>pyridoxal 5'-phosphate</name>
        <dbReference type="ChEBI" id="CHEBI:597326"/>
    </cofactor>
</comment>
<comment type="subunit">
    <text evidence="1">Homodimer.</text>
</comment>
<comment type="similarity">
    <text evidence="1">Belongs to the ACC deaminase/D-cysteine desulfhydrase family.</text>
</comment>
<comment type="sequence caution" evidence="2">
    <conflict type="erroneous initiation">
        <sequence resource="EMBL-CDS" id="AAM86019"/>
    </conflict>
</comment>
<reference key="1">
    <citation type="journal article" date="2001" name="Nature">
        <title>Genome sequence of Yersinia pestis, the causative agent of plague.</title>
        <authorList>
            <person name="Parkhill J."/>
            <person name="Wren B.W."/>
            <person name="Thomson N.R."/>
            <person name="Titball R.W."/>
            <person name="Holden M.T.G."/>
            <person name="Prentice M.B."/>
            <person name="Sebaihia M."/>
            <person name="James K.D."/>
            <person name="Churcher C.M."/>
            <person name="Mungall K.L."/>
            <person name="Baker S."/>
            <person name="Basham D."/>
            <person name="Bentley S.D."/>
            <person name="Brooks K."/>
            <person name="Cerdeno-Tarraga A.-M."/>
            <person name="Chillingworth T."/>
            <person name="Cronin A."/>
            <person name="Davies R.M."/>
            <person name="Davis P."/>
            <person name="Dougan G."/>
            <person name="Feltwell T."/>
            <person name="Hamlin N."/>
            <person name="Holroyd S."/>
            <person name="Jagels K."/>
            <person name="Karlyshev A.V."/>
            <person name="Leather S."/>
            <person name="Moule S."/>
            <person name="Oyston P.C.F."/>
            <person name="Quail M.A."/>
            <person name="Rutherford K.M."/>
            <person name="Simmonds M."/>
            <person name="Skelton J."/>
            <person name="Stevens K."/>
            <person name="Whitehead S."/>
            <person name="Barrell B.G."/>
        </authorList>
    </citation>
    <scope>NUCLEOTIDE SEQUENCE [LARGE SCALE GENOMIC DNA]</scope>
    <source>
        <strain>CO-92 / Biovar Orientalis</strain>
    </source>
</reference>
<reference key="2">
    <citation type="journal article" date="2002" name="J. Bacteriol.">
        <title>Genome sequence of Yersinia pestis KIM.</title>
        <authorList>
            <person name="Deng W."/>
            <person name="Burland V."/>
            <person name="Plunkett G. III"/>
            <person name="Boutin A."/>
            <person name="Mayhew G.F."/>
            <person name="Liss P."/>
            <person name="Perna N.T."/>
            <person name="Rose D.J."/>
            <person name="Mau B."/>
            <person name="Zhou S."/>
            <person name="Schwartz D.C."/>
            <person name="Fetherston J.D."/>
            <person name="Lindler L.E."/>
            <person name="Brubaker R.R."/>
            <person name="Plano G.V."/>
            <person name="Straley S.C."/>
            <person name="McDonough K.A."/>
            <person name="Nilles M.L."/>
            <person name="Matson J.S."/>
            <person name="Blattner F.R."/>
            <person name="Perry R.D."/>
        </authorList>
    </citation>
    <scope>NUCLEOTIDE SEQUENCE [LARGE SCALE GENOMIC DNA]</scope>
    <source>
        <strain>KIM10+ / Biovar Mediaevalis</strain>
    </source>
</reference>
<reference key="3">
    <citation type="journal article" date="2004" name="DNA Res.">
        <title>Complete genome sequence of Yersinia pestis strain 91001, an isolate avirulent to humans.</title>
        <authorList>
            <person name="Song Y."/>
            <person name="Tong Z."/>
            <person name="Wang J."/>
            <person name="Wang L."/>
            <person name="Guo Z."/>
            <person name="Han Y."/>
            <person name="Zhang J."/>
            <person name="Pei D."/>
            <person name="Zhou D."/>
            <person name="Qin H."/>
            <person name="Pang X."/>
            <person name="Han Y."/>
            <person name="Zhai J."/>
            <person name="Li M."/>
            <person name="Cui B."/>
            <person name="Qi Z."/>
            <person name="Jin L."/>
            <person name="Dai R."/>
            <person name="Chen F."/>
            <person name="Li S."/>
            <person name="Ye C."/>
            <person name="Du Z."/>
            <person name="Lin W."/>
            <person name="Wang J."/>
            <person name="Yu J."/>
            <person name="Yang H."/>
            <person name="Wang J."/>
            <person name="Huang P."/>
            <person name="Yang R."/>
        </authorList>
    </citation>
    <scope>NUCLEOTIDE SEQUENCE [LARGE SCALE GENOMIC DNA]</scope>
    <source>
        <strain>91001 / Biovar Mediaevalis</strain>
    </source>
</reference>
<keyword id="KW-0456">Lyase</keyword>
<keyword id="KW-0663">Pyridoxal phosphate</keyword>
<keyword id="KW-1185">Reference proteome</keyword>
<sequence length="330" mass="35039">MTLQQKLTQFPRLDLVGNATPLEKLSRLSDYLGREIYIKRDDVTPVALGGNKLRKLEFLAADALRQGADTLVTAGAIQSNHVRQTAAVAAKLGLHCVALLENPIGTEQANYLTNGNRLLLDLFNVDVVMCEALNDPNQQLAELATRVEAQGFRPYVVPIGGSNALGALGYVQCSLEIAAQAAGNVAFSSVVVASGSAGTHAGLAVGLQQLLPDAELIGVTVSRSADEQRPKVAQIQQALATSLGMTDPLAKITLWDSYFAPQYGMPNEEGIAAIKLLARLEGILLDPVYTGKAMAGLLDGIEQQKFCDKGPILFIHTGGAPALFAYHPQV</sequence>
<organism>
    <name type="scientific">Yersinia pestis</name>
    <dbReference type="NCBI Taxonomy" id="632"/>
    <lineage>
        <taxon>Bacteria</taxon>
        <taxon>Pseudomonadati</taxon>
        <taxon>Pseudomonadota</taxon>
        <taxon>Gammaproteobacteria</taxon>
        <taxon>Enterobacterales</taxon>
        <taxon>Yersiniaceae</taxon>
        <taxon>Yersinia</taxon>
    </lineage>
</organism>
<proteinExistence type="inferred from homology"/>
<dbReference type="EC" id="4.4.1.15" evidence="1"/>
<dbReference type="EMBL" id="AL590842">
    <property type="protein sequence ID" value="CAL20485.1"/>
    <property type="molecule type" value="Genomic_DNA"/>
</dbReference>
<dbReference type="EMBL" id="AE009952">
    <property type="protein sequence ID" value="AAM86019.1"/>
    <property type="status" value="ALT_INIT"/>
    <property type="molecule type" value="Genomic_DNA"/>
</dbReference>
<dbReference type="EMBL" id="AE017042">
    <property type="protein sequence ID" value="AAS61783.1"/>
    <property type="molecule type" value="Genomic_DNA"/>
</dbReference>
<dbReference type="PIR" id="AB0225">
    <property type="entry name" value="AB0225"/>
</dbReference>
<dbReference type="RefSeq" id="WP_002227959.1">
    <property type="nucleotide sequence ID" value="NZ_WUCM01000005.1"/>
</dbReference>
<dbReference type="RefSeq" id="YP_002346839.1">
    <property type="nucleotide sequence ID" value="NC_003143.1"/>
</dbReference>
<dbReference type="SMR" id="Q8ZF73"/>
<dbReference type="STRING" id="214092.YPO1845"/>
<dbReference type="PaxDb" id="214092-YPO1845"/>
<dbReference type="EnsemblBacteria" id="AAS61783">
    <property type="protein sequence ID" value="AAS61783"/>
    <property type="gene ID" value="YP_1548"/>
</dbReference>
<dbReference type="KEGG" id="ype:YPO1845"/>
<dbReference type="KEGG" id="ypj:CH55_830"/>
<dbReference type="KEGG" id="ypk:y2462"/>
<dbReference type="KEGG" id="ypl:CH46_3278"/>
<dbReference type="KEGG" id="ypm:YP_1548"/>
<dbReference type="KEGG" id="ypv:BZ15_1705"/>
<dbReference type="KEGG" id="ypw:CH59_3321"/>
<dbReference type="PATRIC" id="fig|214092.21.peg.2207"/>
<dbReference type="eggNOG" id="COG2515">
    <property type="taxonomic scope" value="Bacteria"/>
</dbReference>
<dbReference type="HOGENOM" id="CLU_048897_1_0_6"/>
<dbReference type="OMA" id="ERYHAGT"/>
<dbReference type="OrthoDB" id="9801249at2"/>
<dbReference type="Proteomes" id="UP000000815">
    <property type="component" value="Chromosome"/>
</dbReference>
<dbReference type="Proteomes" id="UP000001019">
    <property type="component" value="Chromosome"/>
</dbReference>
<dbReference type="Proteomes" id="UP000002490">
    <property type="component" value="Chromosome"/>
</dbReference>
<dbReference type="GO" id="GO:0019148">
    <property type="term" value="F:D-cysteine desulfhydrase activity"/>
    <property type="evidence" value="ECO:0000318"/>
    <property type="project" value="GO_Central"/>
</dbReference>
<dbReference type="GO" id="GO:0046416">
    <property type="term" value="P:D-amino acid metabolic process"/>
    <property type="evidence" value="ECO:0007669"/>
    <property type="project" value="UniProtKB-UniRule"/>
</dbReference>
<dbReference type="CDD" id="cd06449">
    <property type="entry name" value="ACCD"/>
    <property type="match status" value="1"/>
</dbReference>
<dbReference type="FunFam" id="3.40.50.1100:FF:000017">
    <property type="entry name" value="D-cysteine desulfhydrase"/>
    <property type="match status" value="1"/>
</dbReference>
<dbReference type="Gene3D" id="3.40.50.1100">
    <property type="match status" value="2"/>
</dbReference>
<dbReference type="HAMAP" id="MF_01045">
    <property type="entry name" value="D_Cys_desulfhydr"/>
    <property type="match status" value="1"/>
</dbReference>
<dbReference type="InterPro" id="IPR027278">
    <property type="entry name" value="ACCD_DCysDesulf"/>
</dbReference>
<dbReference type="InterPro" id="IPR005966">
    <property type="entry name" value="D-Cys_desShydrase"/>
</dbReference>
<dbReference type="InterPro" id="IPR023702">
    <property type="entry name" value="D_Cys_desulphydr_bac"/>
</dbReference>
<dbReference type="InterPro" id="IPR001926">
    <property type="entry name" value="TrpB-like_PALP"/>
</dbReference>
<dbReference type="InterPro" id="IPR036052">
    <property type="entry name" value="TrpB-like_PALP_sf"/>
</dbReference>
<dbReference type="NCBIfam" id="TIGR01275">
    <property type="entry name" value="ACC_deam_rel"/>
    <property type="match status" value="1"/>
</dbReference>
<dbReference type="NCBIfam" id="NF003030">
    <property type="entry name" value="PRK03910.1-3"/>
    <property type="match status" value="1"/>
</dbReference>
<dbReference type="NCBIfam" id="NF003032">
    <property type="entry name" value="PRK03910.1-5"/>
    <property type="match status" value="1"/>
</dbReference>
<dbReference type="PANTHER" id="PTHR43780">
    <property type="entry name" value="1-AMINOCYCLOPROPANE-1-CARBOXYLATE DEAMINASE-RELATED"/>
    <property type="match status" value="1"/>
</dbReference>
<dbReference type="PANTHER" id="PTHR43780:SF2">
    <property type="entry name" value="1-AMINOCYCLOPROPANE-1-CARBOXYLATE DEAMINASE-RELATED"/>
    <property type="match status" value="1"/>
</dbReference>
<dbReference type="Pfam" id="PF00291">
    <property type="entry name" value="PALP"/>
    <property type="match status" value="1"/>
</dbReference>
<dbReference type="PIRSF" id="PIRSF006278">
    <property type="entry name" value="ACCD_DCysDesulf"/>
    <property type="match status" value="1"/>
</dbReference>
<dbReference type="SUPFAM" id="SSF53686">
    <property type="entry name" value="Tryptophan synthase beta subunit-like PLP-dependent enzymes"/>
    <property type="match status" value="1"/>
</dbReference>
<gene>
    <name evidence="1" type="primary">dcyD</name>
    <name type="synonym">acd</name>
    <name type="ordered locus">YPO1845</name>
    <name type="ordered locus">y2462</name>
    <name type="ordered locus">YP_1548</name>
</gene>
<protein>
    <recommendedName>
        <fullName evidence="1">D-cysteine desulfhydrase</fullName>
        <ecNumber evidence="1">4.4.1.15</ecNumber>
    </recommendedName>
</protein>
<name>DCYD_YERPE</name>
<feature type="chain" id="PRO_0000184519" description="D-cysteine desulfhydrase">
    <location>
        <begin position="1"/>
        <end position="330"/>
    </location>
</feature>
<feature type="modified residue" description="N6-(pyridoxal phosphate)lysine" evidence="1">
    <location>
        <position position="52"/>
    </location>
</feature>
<evidence type="ECO:0000255" key="1">
    <source>
        <dbReference type="HAMAP-Rule" id="MF_01045"/>
    </source>
</evidence>
<evidence type="ECO:0000305" key="2"/>
<accession>Q8ZF73</accession>
<accession>Q0WFU9</accession>